<organism>
    <name type="scientific">Ruegeria sp. (strain TM1040)</name>
    <name type="common">Silicibacter sp.</name>
    <dbReference type="NCBI Taxonomy" id="292414"/>
    <lineage>
        <taxon>Bacteria</taxon>
        <taxon>Pseudomonadati</taxon>
        <taxon>Pseudomonadota</taxon>
        <taxon>Alphaproteobacteria</taxon>
        <taxon>Rhodobacterales</taxon>
        <taxon>Roseobacteraceae</taxon>
        <taxon>Ruegeria</taxon>
    </lineage>
</organism>
<keyword id="KW-0169">Cobalamin biosynthesis</keyword>
<keyword id="KW-0315">Glutamine amidotransferase</keyword>
<keyword id="KW-1185">Reference proteome</keyword>
<protein>
    <recommendedName>
        <fullName evidence="1">Cobyric acid synthase</fullName>
    </recommendedName>
</protein>
<gene>
    <name evidence="1" type="primary">cobQ</name>
    <name type="ordered locus">TM1040_1989</name>
</gene>
<reference key="1">
    <citation type="submission" date="2006-05" db="EMBL/GenBank/DDBJ databases">
        <title>Complete sequence of chromosome of Silicibacter sp. TM1040.</title>
        <authorList>
            <consortium name="US DOE Joint Genome Institute"/>
            <person name="Copeland A."/>
            <person name="Lucas S."/>
            <person name="Lapidus A."/>
            <person name="Barry K."/>
            <person name="Detter J.C."/>
            <person name="Glavina del Rio T."/>
            <person name="Hammon N."/>
            <person name="Israni S."/>
            <person name="Dalin E."/>
            <person name="Tice H."/>
            <person name="Pitluck S."/>
            <person name="Brettin T."/>
            <person name="Bruce D."/>
            <person name="Han C."/>
            <person name="Tapia R."/>
            <person name="Goodwin L."/>
            <person name="Thompson L.S."/>
            <person name="Gilna P."/>
            <person name="Schmutz J."/>
            <person name="Larimer F."/>
            <person name="Land M."/>
            <person name="Hauser L."/>
            <person name="Kyrpides N."/>
            <person name="Kim E."/>
            <person name="Belas R."/>
            <person name="Moran M.A."/>
            <person name="Buchan A."/>
            <person name="Gonzalez J.M."/>
            <person name="Schell M.A."/>
            <person name="Sun F."/>
            <person name="Richardson P."/>
        </authorList>
    </citation>
    <scope>NUCLEOTIDE SEQUENCE [LARGE SCALE GENOMIC DNA]</scope>
    <source>
        <strain>TM1040</strain>
    </source>
</reference>
<comment type="function">
    <text evidence="1">Catalyzes amidations at positions B, D, E, and G on adenosylcobyrinic A,C-diamide. NH(2) groups are provided by glutamine, and one molecule of ATP is hydrogenolyzed for each amidation.</text>
</comment>
<comment type="pathway">
    <text evidence="1">Cofactor biosynthesis; adenosylcobalamin biosynthesis.</text>
</comment>
<comment type="similarity">
    <text evidence="1">Belongs to the CobB/CobQ family. CobQ subfamily.</text>
</comment>
<evidence type="ECO:0000255" key="1">
    <source>
        <dbReference type="HAMAP-Rule" id="MF_00028"/>
    </source>
</evidence>
<name>COBQ_RUEST</name>
<proteinExistence type="inferred from homology"/>
<sequence length="482" mass="51028">MIQGTGSNVGKSMLVAGLARALRKRGLSVAPFKPQNMSNNAAVTSDGGEIGRAQALQARAAGLAPHTDMNPVLLKPETDTGAQVIVQGKRRGTRAAGSFMRDKAGLLEATLESFHRLAAQHDIVLIEGAGSPAETNLRKGDIANMGFAEAAGVPVLLVGDIHRGGVIAQIVGTHTVLEPSDRARIKAFAVNRFRGDLSLFDGGRDDIARWTGWPSLGVVPWFWDAWKLPAEDMMDIASHKGGACKVVVPQLERMANFDDLDPLAAEPAVTVEIVPPGRALPGDADLVLIPGSKSTIGDLAYLRTQGWDIDILAHHRRGGHVLGLCGGYQMLGQSIDDPEGVDGHPGKVAGLGLLDVHTVMAGDKRVTLSAARTLEGDLPVSGYEIHMGRTTGPDCARAWLALEGRAEGATSADGRVRGSYLHGLFTSDAFRAQFLSDLGHQSDLDYDAGVEATLDELAAHLEQYMDVEGLLELAEPIPVPES</sequence>
<dbReference type="EMBL" id="CP000377">
    <property type="protein sequence ID" value="ABF64721.1"/>
    <property type="molecule type" value="Genomic_DNA"/>
</dbReference>
<dbReference type="SMR" id="Q1GF45"/>
<dbReference type="STRING" id="292414.TM1040_1989"/>
<dbReference type="KEGG" id="sit:TM1040_1989"/>
<dbReference type="eggNOG" id="COG1492">
    <property type="taxonomic scope" value="Bacteria"/>
</dbReference>
<dbReference type="HOGENOM" id="CLU_019250_2_2_5"/>
<dbReference type="UniPathway" id="UPA00148"/>
<dbReference type="Proteomes" id="UP000000636">
    <property type="component" value="Chromosome"/>
</dbReference>
<dbReference type="GO" id="GO:0015420">
    <property type="term" value="F:ABC-type vitamin B12 transporter activity"/>
    <property type="evidence" value="ECO:0007669"/>
    <property type="project" value="UniProtKB-UniRule"/>
</dbReference>
<dbReference type="GO" id="GO:0003824">
    <property type="term" value="F:catalytic activity"/>
    <property type="evidence" value="ECO:0007669"/>
    <property type="project" value="InterPro"/>
</dbReference>
<dbReference type="GO" id="GO:0009236">
    <property type="term" value="P:cobalamin biosynthetic process"/>
    <property type="evidence" value="ECO:0007669"/>
    <property type="project" value="UniProtKB-UniRule"/>
</dbReference>
<dbReference type="CDD" id="cd05389">
    <property type="entry name" value="CobQ_N"/>
    <property type="match status" value="1"/>
</dbReference>
<dbReference type="CDD" id="cd01750">
    <property type="entry name" value="GATase1_CobQ"/>
    <property type="match status" value="1"/>
</dbReference>
<dbReference type="Gene3D" id="3.40.50.880">
    <property type="match status" value="1"/>
</dbReference>
<dbReference type="Gene3D" id="3.40.50.300">
    <property type="entry name" value="P-loop containing nucleotide triphosphate hydrolases"/>
    <property type="match status" value="1"/>
</dbReference>
<dbReference type="HAMAP" id="MF_00028">
    <property type="entry name" value="CobQ"/>
    <property type="match status" value="1"/>
</dbReference>
<dbReference type="InterPro" id="IPR029062">
    <property type="entry name" value="Class_I_gatase-like"/>
</dbReference>
<dbReference type="InterPro" id="IPR002586">
    <property type="entry name" value="CobQ/CobB/MinD/ParA_Nub-bd_dom"/>
</dbReference>
<dbReference type="InterPro" id="IPR033949">
    <property type="entry name" value="CobQ_GATase1"/>
</dbReference>
<dbReference type="InterPro" id="IPR047045">
    <property type="entry name" value="CobQ_N"/>
</dbReference>
<dbReference type="InterPro" id="IPR004459">
    <property type="entry name" value="CobQ_synth"/>
</dbReference>
<dbReference type="InterPro" id="IPR011698">
    <property type="entry name" value="GATase_3"/>
</dbReference>
<dbReference type="InterPro" id="IPR027417">
    <property type="entry name" value="P-loop_NTPase"/>
</dbReference>
<dbReference type="NCBIfam" id="TIGR00313">
    <property type="entry name" value="cobQ"/>
    <property type="match status" value="1"/>
</dbReference>
<dbReference type="NCBIfam" id="NF001989">
    <property type="entry name" value="PRK00784.1"/>
    <property type="match status" value="1"/>
</dbReference>
<dbReference type="PANTHER" id="PTHR21343:SF1">
    <property type="entry name" value="COBYRIC ACID SYNTHASE"/>
    <property type="match status" value="1"/>
</dbReference>
<dbReference type="PANTHER" id="PTHR21343">
    <property type="entry name" value="DETHIOBIOTIN SYNTHETASE"/>
    <property type="match status" value="1"/>
</dbReference>
<dbReference type="Pfam" id="PF01656">
    <property type="entry name" value="CbiA"/>
    <property type="match status" value="1"/>
</dbReference>
<dbReference type="Pfam" id="PF07685">
    <property type="entry name" value="GATase_3"/>
    <property type="match status" value="1"/>
</dbReference>
<dbReference type="SUPFAM" id="SSF52317">
    <property type="entry name" value="Class I glutamine amidotransferase-like"/>
    <property type="match status" value="1"/>
</dbReference>
<dbReference type="SUPFAM" id="SSF52540">
    <property type="entry name" value="P-loop containing nucleoside triphosphate hydrolases"/>
    <property type="match status" value="1"/>
</dbReference>
<dbReference type="PROSITE" id="PS51274">
    <property type="entry name" value="GATASE_COBBQ"/>
    <property type="match status" value="1"/>
</dbReference>
<feature type="chain" id="PRO_0000332387" description="Cobyric acid synthase">
    <location>
        <begin position="1"/>
        <end position="482"/>
    </location>
</feature>
<feature type="domain" description="GATase cobBQ-type" evidence="1">
    <location>
        <begin position="243"/>
        <end position="430"/>
    </location>
</feature>
<feature type="active site" description="Nucleophile" evidence="1">
    <location>
        <position position="325"/>
    </location>
</feature>
<feature type="active site" evidence="1">
    <location>
        <position position="422"/>
    </location>
</feature>
<accession>Q1GF45</accession>